<keyword id="KW-0028">Amino-acid biosynthesis</keyword>
<keyword id="KW-0057">Aromatic amino acid biosynthesis</keyword>
<keyword id="KW-0067">ATP-binding</keyword>
<keyword id="KW-0963">Cytoplasm</keyword>
<keyword id="KW-0418">Kinase</keyword>
<keyword id="KW-0460">Magnesium</keyword>
<keyword id="KW-0479">Metal-binding</keyword>
<keyword id="KW-0547">Nucleotide-binding</keyword>
<keyword id="KW-1185">Reference proteome</keyword>
<keyword id="KW-0808">Transferase</keyword>
<feature type="chain" id="PRO_0000192403" description="Shikimate kinase">
    <location>
        <begin position="1"/>
        <end position="187"/>
    </location>
</feature>
<feature type="binding site" evidence="1">
    <location>
        <begin position="18"/>
        <end position="23"/>
    </location>
    <ligand>
        <name>ATP</name>
        <dbReference type="ChEBI" id="CHEBI:30616"/>
    </ligand>
</feature>
<feature type="binding site" evidence="1">
    <location>
        <position position="22"/>
    </location>
    <ligand>
        <name>Mg(2+)</name>
        <dbReference type="ChEBI" id="CHEBI:18420"/>
    </ligand>
</feature>
<feature type="binding site" evidence="1">
    <location>
        <position position="40"/>
    </location>
    <ligand>
        <name>substrate</name>
    </ligand>
</feature>
<feature type="binding site" evidence="1">
    <location>
        <position position="64"/>
    </location>
    <ligand>
        <name>substrate</name>
    </ligand>
</feature>
<feature type="binding site" evidence="1">
    <location>
        <position position="86"/>
    </location>
    <ligand>
        <name>substrate</name>
    </ligand>
</feature>
<feature type="binding site" evidence="1">
    <location>
        <position position="128"/>
    </location>
    <ligand>
        <name>ATP</name>
        <dbReference type="ChEBI" id="CHEBI:30616"/>
    </ligand>
</feature>
<feature type="binding site" evidence="1">
    <location>
        <position position="147"/>
    </location>
    <ligand>
        <name>substrate</name>
    </ligand>
</feature>
<feature type="binding site" evidence="1">
    <location>
        <position position="164"/>
    </location>
    <ligand>
        <name>ATP</name>
        <dbReference type="ChEBI" id="CHEBI:30616"/>
    </ligand>
</feature>
<proteinExistence type="inferred from homology"/>
<organism>
    <name type="scientific">Rhodopirellula baltica (strain DSM 10527 / NCIMB 13988 / SH1)</name>
    <dbReference type="NCBI Taxonomy" id="243090"/>
    <lineage>
        <taxon>Bacteria</taxon>
        <taxon>Pseudomonadati</taxon>
        <taxon>Planctomycetota</taxon>
        <taxon>Planctomycetia</taxon>
        <taxon>Pirellulales</taxon>
        <taxon>Pirellulaceae</taxon>
        <taxon>Rhodopirellula</taxon>
    </lineage>
</organism>
<comment type="function">
    <text evidence="1">Catalyzes the specific phosphorylation of the 3-hydroxyl group of shikimic acid using ATP as a cosubstrate.</text>
</comment>
<comment type="catalytic activity">
    <reaction evidence="1">
        <text>shikimate + ATP = 3-phosphoshikimate + ADP + H(+)</text>
        <dbReference type="Rhea" id="RHEA:13121"/>
        <dbReference type="ChEBI" id="CHEBI:15378"/>
        <dbReference type="ChEBI" id="CHEBI:30616"/>
        <dbReference type="ChEBI" id="CHEBI:36208"/>
        <dbReference type="ChEBI" id="CHEBI:145989"/>
        <dbReference type="ChEBI" id="CHEBI:456216"/>
        <dbReference type="EC" id="2.7.1.71"/>
    </reaction>
</comment>
<comment type="cofactor">
    <cofactor evidence="1">
        <name>Mg(2+)</name>
        <dbReference type="ChEBI" id="CHEBI:18420"/>
    </cofactor>
    <text evidence="1">Binds 1 Mg(2+) ion per subunit.</text>
</comment>
<comment type="pathway">
    <text evidence="1">Metabolic intermediate biosynthesis; chorismate biosynthesis; chorismate from D-erythrose 4-phosphate and phosphoenolpyruvate: step 5/7.</text>
</comment>
<comment type="subunit">
    <text evidence="1">Monomer.</text>
</comment>
<comment type="subcellular location">
    <subcellularLocation>
        <location evidence="1">Cytoplasm</location>
    </subcellularLocation>
</comment>
<comment type="similarity">
    <text evidence="1">Belongs to the shikimate kinase family.</text>
</comment>
<accession>Q7UU71</accession>
<sequence length="187" mass="20489">MNNDEVKPQHLYLTGYRGCGKSTLAKLLAQKLSLPSVDLDDVIETTAGKSIAEIFANETEVGFRDREEAALMEVSRRPQHVIALGGGTILREANRNIIANSGWCVWLDAEPDVLVARLAGDATTADRRPSLTDQSVFDEVQSVMSHREPLYRASADLRIDTSHRNMDEILTEVLKAAPSSIGQADLS</sequence>
<name>AROK_RHOBA</name>
<protein>
    <recommendedName>
        <fullName evidence="1">Shikimate kinase</fullName>
        <shortName evidence="1">SK</shortName>
        <ecNumber evidence="1">2.7.1.71</ecNumber>
    </recommendedName>
</protein>
<reference key="1">
    <citation type="journal article" date="2003" name="Proc. Natl. Acad. Sci. U.S.A.">
        <title>Complete genome sequence of the marine planctomycete Pirellula sp. strain 1.</title>
        <authorList>
            <person name="Gloeckner F.O."/>
            <person name="Kube M."/>
            <person name="Bauer M."/>
            <person name="Teeling H."/>
            <person name="Lombardot T."/>
            <person name="Ludwig W."/>
            <person name="Gade D."/>
            <person name="Beck A."/>
            <person name="Borzym K."/>
            <person name="Heitmann K."/>
            <person name="Rabus R."/>
            <person name="Schlesner H."/>
            <person name="Amann R."/>
            <person name="Reinhardt R."/>
        </authorList>
    </citation>
    <scope>NUCLEOTIDE SEQUENCE [LARGE SCALE GENOMIC DNA]</scope>
    <source>
        <strain>DSM 10527 / NCIMB 13988 / SH1</strain>
    </source>
</reference>
<dbReference type="EC" id="2.7.1.71" evidence="1"/>
<dbReference type="EMBL" id="BX294138">
    <property type="protein sequence ID" value="CAD73213.1"/>
    <property type="molecule type" value="Genomic_DNA"/>
</dbReference>
<dbReference type="RefSeq" id="NP_865529.1">
    <property type="nucleotide sequence ID" value="NC_005027.1"/>
</dbReference>
<dbReference type="RefSeq" id="WP_011119378.1">
    <property type="nucleotide sequence ID" value="NC_005027.1"/>
</dbReference>
<dbReference type="SMR" id="Q7UU71"/>
<dbReference type="FunCoup" id="Q7UU71">
    <property type="interactions" value="98"/>
</dbReference>
<dbReference type="STRING" id="243090.RB3471"/>
<dbReference type="EnsemblBacteria" id="CAD73213">
    <property type="protein sequence ID" value="CAD73213"/>
    <property type="gene ID" value="RB3471"/>
</dbReference>
<dbReference type="KEGG" id="rba:RB3471"/>
<dbReference type="PATRIC" id="fig|243090.15.peg.1606"/>
<dbReference type="eggNOG" id="COG0703">
    <property type="taxonomic scope" value="Bacteria"/>
</dbReference>
<dbReference type="HOGENOM" id="CLU_057607_2_2_0"/>
<dbReference type="InParanoid" id="Q7UU71"/>
<dbReference type="OrthoDB" id="9800332at2"/>
<dbReference type="UniPathway" id="UPA00053">
    <property type="reaction ID" value="UER00088"/>
</dbReference>
<dbReference type="Proteomes" id="UP000001025">
    <property type="component" value="Chromosome"/>
</dbReference>
<dbReference type="GO" id="GO:0005829">
    <property type="term" value="C:cytosol"/>
    <property type="evidence" value="ECO:0000318"/>
    <property type="project" value="GO_Central"/>
</dbReference>
<dbReference type="GO" id="GO:0005524">
    <property type="term" value="F:ATP binding"/>
    <property type="evidence" value="ECO:0007669"/>
    <property type="project" value="UniProtKB-UniRule"/>
</dbReference>
<dbReference type="GO" id="GO:0000287">
    <property type="term" value="F:magnesium ion binding"/>
    <property type="evidence" value="ECO:0007669"/>
    <property type="project" value="UniProtKB-UniRule"/>
</dbReference>
<dbReference type="GO" id="GO:0004765">
    <property type="term" value="F:shikimate kinase activity"/>
    <property type="evidence" value="ECO:0000318"/>
    <property type="project" value="GO_Central"/>
</dbReference>
<dbReference type="GO" id="GO:0008652">
    <property type="term" value="P:amino acid biosynthetic process"/>
    <property type="evidence" value="ECO:0007669"/>
    <property type="project" value="UniProtKB-KW"/>
</dbReference>
<dbReference type="GO" id="GO:0009073">
    <property type="term" value="P:aromatic amino acid family biosynthetic process"/>
    <property type="evidence" value="ECO:0007669"/>
    <property type="project" value="UniProtKB-KW"/>
</dbReference>
<dbReference type="GO" id="GO:0009423">
    <property type="term" value="P:chorismate biosynthetic process"/>
    <property type="evidence" value="ECO:0007669"/>
    <property type="project" value="UniProtKB-UniRule"/>
</dbReference>
<dbReference type="CDD" id="cd00464">
    <property type="entry name" value="SK"/>
    <property type="match status" value="1"/>
</dbReference>
<dbReference type="Gene3D" id="3.40.50.300">
    <property type="entry name" value="P-loop containing nucleotide triphosphate hydrolases"/>
    <property type="match status" value="1"/>
</dbReference>
<dbReference type="HAMAP" id="MF_00109">
    <property type="entry name" value="Shikimate_kinase"/>
    <property type="match status" value="1"/>
</dbReference>
<dbReference type="InterPro" id="IPR027417">
    <property type="entry name" value="P-loop_NTPase"/>
</dbReference>
<dbReference type="InterPro" id="IPR031322">
    <property type="entry name" value="Shikimate/glucono_kinase"/>
</dbReference>
<dbReference type="InterPro" id="IPR000623">
    <property type="entry name" value="Shikimate_kinase/TSH1"/>
</dbReference>
<dbReference type="InterPro" id="IPR023000">
    <property type="entry name" value="Shikimate_kinase_CS"/>
</dbReference>
<dbReference type="PANTHER" id="PTHR21087">
    <property type="entry name" value="SHIKIMATE KINASE"/>
    <property type="match status" value="1"/>
</dbReference>
<dbReference type="PANTHER" id="PTHR21087:SF16">
    <property type="entry name" value="SHIKIMATE KINASE 1, CHLOROPLASTIC"/>
    <property type="match status" value="1"/>
</dbReference>
<dbReference type="Pfam" id="PF01202">
    <property type="entry name" value="SKI"/>
    <property type="match status" value="1"/>
</dbReference>
<dbReference type="PRINTS" id="PR01100">
    <property type="entry name" value="SHIKIMTKNASE"/>
</dbReference>
<dbReference type="SUPFAM" id="SSF52540">
    <property type="entry name" value="P-loop containing nucleoside triphosphate hydrolases"/>
    <property type="match status" value="1"/>
</dbReference>
<dbReference type="PROSITE" id="PS01128">
    <property type="entry name" value="SHIKIMATE_KINASE"/>
    <property type="match status" value="1"/>
</dbReference>
<gene>
    <name evidence="1" type="primary">aroK</name>
    <name type="ordered locus">RB3471</name>
</gene>
<evidence type="ECO:0000255" key="1">
    <source>
        <dbReference type="HAMAP-Rule" id="MF_00109"/>
    </source>
</evidence>